<dbReference type="EC" id="1.11.1.7"/>
<dbReference type="EMBL" id="AC010657">
    <property type="protein sequence ID" value="AAF63165.1"/>
    <property type="status" value="ALT_SEQ"/>
    <property type="molecule type" value="Genomic_DNA"/>
</dbReference>
<dbReference type="EMBL" id="AC012188">
    <property type="protein sequence ID" value="AAF43956.1"/>
    <property type="status" value="ALT_INIT"/>
    <property type="molecule type" value="Genomic_DNA"/>
</dbReference>
<dbReference type="EMBL" id="CP002684">
    <property type="protein sequence ID" value="AEE29180.1"/>
    <property type="molecule type" value="Genomic_DNA"/>
</dbReference>
<dbReference type="PIR" id="C86280">
    <property type="entry name" value="C86280"/>
</dbReference>
<dbReference type="RefSeq" id="NP_172907.1">
    <property type="nucleotide sequence ID" value="NM_101322.2"/>
</dbReference>
<dbReference type="SMR" id="Q9M9Q9"/>
<dbReference type="FunCoup" id="Q9M9Q9">
    <property type="interactions" value="129"/>
</dbReference>
<dbReference type="STRING" id="3702.Q9M9Q9"/>
<dbReference type="PeroxiBase" id="81">
    <property type="entry name" value="AtPrx05"/>
</dbReference>
<dbReference type="GlyCosmos" id="Q9M9Q9">
    <property type="glycosylation" value="2 sites, No reported glycans"/>
</dbReference>
<dbReference type="GlyGen" id="Q9M9Q9">
    <property type="glycosylation" value="2 sites"/>
</dbReference>
<dbReference type="PaxDb" id="3702-AT1G14550.1"/>
<dbReference type="ProteomicsDB" id="236425"/>
<dbReference type="EnsemblPlants" id="AT1G14550.1">
    <property type="protein sequence ID" value="AT1G14550.1"/>
    <property type="gene ID" value="AT1G14550"/>
</dbReference>
<dbReference type="GeneID" id="838017"/>
<dbReference type="Gramene" id="AT1G14550.1">
    <property type="protein sequence ID" value="AT1G14550.1"/>
    <property type="gene ID" value="AT1G14550"/>
</dbReference>
<dbReference type="KEGG" id="ath:AT1G14550"/>
<dbReference type="Araport" id="AT1G14550"/>
<dbReference type="TAIR" id="AT1G14550"/>
<dbReference type="eggNOG" id="ENOG502QSXF">
    <property type="taxonomic scope" value="Eukaryota"/>
</dbReference>
<dbReference type="HOGENOM" id="CLU_010543_0_1_1"/>
<dbReference type="InParanoid" id="Q9M9Q9"/>
<dbReference type="OMA" id="ICQAQLS"/>
<dbReference type="PhylomeDB" id="Q9M9Q9"/>
<dbReference type="BioCyc" id="ARA:AT1G14550-MONOMER"/>
<dbReference type="PRO" id="PR:Q9M9Q9"/>
<dbReference type="Proteomes" id="UP000006548">
    <property type="component" value="Chromosome 1"/>
</dbReference>
<dbReference type="ExpressionAtlas" id="Q9M9Q9">
    <property type="expression patterns" value="baseline and differential"/>
</dbReference>
<dbReference type="GO" id="GO:0005576">
    <property type="term" value="C:extracellular region"/>
    <property type="evidence" value="ECO:0007669"/>
    <property type="project" value="UniProtKB-SubCell"/>
</dbReference>
<dbReference type="GO" id="GO:0020037">
    <property type="term" value="F:heme binding"/>
    <property type="evidence" value="ECO:0007669"/>
    <property type="project" value="InterPro"/>
</dbReference>
<dbReference type="GO" id="GO:0140825">
    <property type="term" value="F:lactoperoxidase activity"/>
    <property type="evidence" value="ECO:0007669"/>
    <property type="project" value="UniProtKB-EC"/>
</dbReference>
<dbReference type="GO" id="GO:0046872">
    <property type="term" value="F:metal ion binding"/>
    <property type="evidence" value="ECO:0007669"/>
    <property type="project" value="UniProtKB-KW"/>
</dbReference>
<dbReference type="GO" id="GO:0071456">
    <property type="term" value="P:cellular response to hypoxia"/>
    <property type="evidence" value="ECO:0000270"/>
    <property type="project" value="TAIR"/>
</dbReference>
<dbReference type="GO" id="GO:0042744">
    <property type="term" value="P:hydrogen peroxide catabolic process"/>
    <property type="evidence" value="ECO:0007669"/>
    <property type="project" value="InterPro"/>
</dbReference>
<dbReference type="GO" id="GO:0006979">
    <property type="term" value="P:response to oxidative stress"/>
    <property type="evidence" value="ECO:0007669"/>
    <property type="project" value="InterPro"/>
</dbReference>
<dbReference type="CDD" id="cd00693">
    <property type="entry name" value="secretory_peroxidase"/>
    <property type="match status" value="1"/>
</dbReference>
<dbReference type="FunFam" id="1.10.420.10:FF:000001">
    <property type="entry name" value="Peroxidase"/>
    <property type="match status" value="1"/>
</dbReference>
<dbReference type="FunFam" id="1.10.520.10:FF:000009">
    <property type="entry name" value="Peroxidase"/>
    <property type="match status" value="1"/>
</dbReference>
<dbReference type="Gene3D" id="1.10.520.10">
    <property type="match status" value="1"/>
</dbReference>
<dbReference type="Gene3D" id="1.10.420.10">
    <property type="entry name" value="Peroxidase, domain 2"/>
    <property type="match status" value="1"/>
</dbReference>
<dbReference type="InterPro" id="IPR002016">
    <property type="entry name" value="Haem_peroxidase"/>
</dbReference>
<dbReference type="InterPro" id="IPR010255">
    <property type="entry name" value="Haem_peroxidase_sf"/>
</dbReference>
<dbReference type="InterPro" id="IPR000823">
    <property type="entry name" value="Peroxidase_pln"/>
</dbReference>
<dbReference type="InterPro" id="IPR019794">
    <property type="entry name" value="Peroxidases_AS"/>
</dbReference>
<dbReference type="InterPro" id="IPR019793">
    <property type="entry name" value="Peroxidases_heam-ligand_BS"/>
</dbReference>
<dbReference type="InterPro" id="IPR033905">
    <property type="entry name" value="Secretory_peroxidase"/>
</dbReference>
<dbReference type="PANTHER" id="PTHR31388:SF115">
    <property type="entry name" value="PEROXIDASE 5"/>
    <property type="match status" value="1"/>
</dbReference>
<dbReference type="PANTHER" id="PTHR31388">
    <property type="entry name" value="PEROXIDASE 72-RELATED"/>
    <property type="match status" value="1"/>
</dbReference>
<dbReference type="Pfam" id="PF00141">
    <property type="entry name" value="peroxidase"/>
    <property type="match status" value="1"/>
</dbReference>
<dbReference type="PRINTS" id="PR00458">
    <property type="entry name" value="PEROXIDASE"/>
</dbReference>
<dbReference type="PRINTS" id="PR00461">
    <property type="entry name" value="PLPEROXIDASE"/>
</dbReference>
<dbReference type="SUPFAM" id="SSF48113">
    <property type="entry name" value="Heme-dependent peroxidases"/>
    <property type="match status" value="1"/>
</dbReference>
<dbReference type="PROSITE" id="PS00435">
    <property type="entry name" value="PEROXIDASE_1"/>
    <property type="match status" value="1"/>
</dbReference>
<dbReference type="PROSITE" id="PS00436">
    <property type="entry name" value="PEROXIDASE_2"/>
    <property type="match status" value="1"/>
</dbReference>
<dbReference type="PROSITE" id="PS50873">
    <property type="entry name" value="PEROXIDASE_4"/>
    <property type="match status" value="1"/>
</dbReference>
<proteinExistence type="inferred from homology"/>
<protein>
    <recommendedName>
        <fullName>Peroxidase 5</fullName>
        <shortName>Atperox P5</shortName>
        <ecNumber>1.11.1.7</ecNumber>
    </recommendedName>
</protein>
<gene>
    <name type="primary">PER5</name>
    <name type="synonym">P5</name>
    <name type="ordered locus">At1g14550</name>
    <name type="ORF">F14L17.33</name>
    <name type="ORF">T5E21.5</name>
</gene>
<reference key="1">
    <citation type="journal article" date="2000" name="Nature">
        <title>Sequence and analysis of chromosome 1 of the plant Arabidopsis thaliana.</title>
        <authorList>
            <person name="Theologis A."/>
            <person name="Ecker J.R."/>
            <person name="Palm C.J."/>
            <person name="Federspiel N.A."/>
            <person name="Kaul S."/>
            <person name="White O."/>
            <person name="Alonso J."/>
            <person name="Altafi H."/>
            <person name="Araujo R."/>
            <person name="Bowman C.L."/>
            <person name="Brooks S.Y."/>
            <person name="Buehler E."/>
            <person name="Chan A."/>
            <person name="Chao Q."/>
            <person name="Chen H."/>
            <person name="Cheuk R.F."/>
            <person name="Chin C.W."/>
            <person name="Chung M.K."/>
            <person name="Conn L."/>
            <person name="Conway A.B."/>
            <person name="Conway A.R."/>
            <person name="Creasy T.H."/>
            <person name="Dewar K."/>
            <person name="Dunn P."/>
            <person name="Etgu P."/>
            <person name="Feldblyum T.V."/>
            <person name="Feng J.-D."/>
            <person name="Fong B."/>
            <person name="Fujii C.Y."/>
            <person name="Gill J.E."/>
            <person name="Goldsmith A.D."/>
            <person name="Haas B."/>
            <person name="Hansen N.F."/>
            <person name="Hughes B."/>
            <person name="Huizar L."/>
            <person name="Hunter J.L."/>
            <person name="Jenkins J."/>
            <person name="Johnson-Hopson C."/>
            <person name="Khan S."/>
            <person name="Khaykin E."/>
            <person name="Kim C.J."/>
            <person name="Koo H.L."/>
            <person name="Kremenetskaia I."/>
            <person name="Kurtz D.B."/>
            <person name="Kwan A."/>
            <person name="Lam B."/>
            <person name="Langin-Hooper S."/>
            <person name="Lee A."/>
            <person name="Lee J.M."/>
            <person name="Lenz C.A."/>
            <person name="Li J.H."/>
            <person name="Li Y.-P."/>
            <person name="Lin X."/>
            <person name="Liu S.X."/>
            <person name="Liu Z.A."/>
            <person name="Luros J.S."/>
            <person name="Maiti R."/>
            <person name="Marziali A."/>
            <person name="Militscher J."/>
            <person name="Miranda M."/>
            <person name="Nguyen M."/>
            <person name="Nierman W.C."/>
            <person name="Osborne B.I."/>
            <person name="Pai G."/>
            <person name="Peterson J."/>
            <person name="Pham P.K."/>
            <person name="Rizzo M."/>
            <person name="Rooney T."/>
            <person name="Rowley D."/>
            <person name="Sakano H."/>
            <person name="Salzberg S.L."/>
            <person name="Schwartz J.R."/>
            <person name="Shinn P."/>
            <person name="Southwick A.M."/>
            <person name="Sun H."/>
            <person name="Tallon L.J."/>
            <person name="Tambunga G."/>
            <person name="Toriumi M.J."/>
            <person name="Town C.D."/>
            <person name="Utterback T."/>
            <person name="Van Aken S."/>
            <person name="Vaysberg M."/>
            <person name="Vysotskaia V.S."/>
            <person name="Walker M."/>
            <person name="Wu D."/>
            <person name="Yu G."/>
            <person name="Fraser C.M."/>
            <person name="Venter J.C."/>
            <person name="Davis R.W."/>
        </authorList>
    </citation>
    <scope>NUCLEOTIDE SEQUENCE [LARGE SCALE GENOMIC DNA]</scope>
    <source>
        <strain>cv. Columbia</strain>
    </source>
</reference>
<reference key="2">
    <citation type="journal article" date="2017" name="Plant J.">
        <title>Araport11: a complete reannotation of the Arabidopsis thaliana reference genome.</title>
        <authorList>
            <person name="Cheng C.Y."/>
            <person name="Krishnakumar V."/>
            <person name="Chan A.P."/>
            <person name="Thibaud-Nissen F."/>
            <person name="Schobel S."/>
            <person name="Town C.D."/>
        </authorList>
    </citation>
    <scope>GENOME REANNOTATION</scope>
    <source>
        <strain>cv. Columbia</strain>
    </source>
</reference>
<reference key="3">
    <citation type="journal article" date="2002" name="Gene">
        <title>Analysis and expression of the class III peroxidase large gene family in Arabidopsis thaliana.</title>
        <authorList>
            <person name="Tognolli M."/>
            <person name="Penel C."/>
            <person name="Greppin H."/>
            <person name="Simon P."/>
        </authorList>
    </citation>
    <scope>GENE FAMILY ORGANIZATION</scope>
    <scope>NOMENCLATURE</scope>
    <source>
        <strain>cv. Columbia</strain>
    </source>
</reference>
<comment type="function">
    <text>Removal of H(2)O(2), oxidation of toxic reductants, biosynthesis and degradation of lignin, suberization, auxin catabolism, response to environmental stresses such as wounding, pathogen attack and oxidative stress. These functions might be dependent on each isozyme/isoform in each plant tissue.</text>
</comment>
<comment type="catalytic activity">
    <reaction>
        <text>2 a phenolic donor + H2O2 = 2 a phenolic radical donor + 2 H2O</text>
        <dbReference type="Rhea" id="RHEA:56136"/>
        <dbReference type="ChEBI" id="CHEBI:15377"/>
        <dbReference type="ChEBI" id="CHEBI:16240"/>
        <dbReference type="ChEBI" id="CHEBI:139520"/>
        <dbReference type="ChEBI" id="CHEBI:139521"/>
        <dbReference type="EC" id="1.11.1.7"/>
    </reaction>
</comment>
<comment type="cofactor">
    <cofactor evidence="3">
        <name>heme b</name>
        <dbReference type="ChEBI" id="CHEBI:60344"/>
    </cofactor>
    <text evidence="3">Binds 1 heme b (iron(II)-protoporphyrin IX) group per subunit.</text>
</comment>
<comment type="cofactor">
    <cofactor evidence="3">
        <name>Ca(2+)</name>
        <dbReference type="ChEBI" id="CHEBI:29108"/>
    </cofactor>
    <text evidence="3">Binds 2 calcium ions per subunit.</text>
</comment>
<comment type="subcellular location">
    <subcellularLocation>
        <location evidence="3">Secreted</location>
    </subcellularLocation>
</comment>
<comment type="miscellaneous">
    <text>There are 73 peroxidase genes in A.thaliana.</text>
</comment>
<comment type="similarity">
    <text evidence="3">Belongs to the peroxidase family. Classical plant (class III) peroxidase subfamily.</text>
</comment>
<comment type="sequence caution" evidence="5">
    <conflict type="erroneous initiation">
        <sequence resource="EMBL-CDS" id="AAF43956"/>
    </conflict>
</comment>
<comment type="sequence caution" evidence="5">
    <conflict type="erroneous gene model prediction">
        <sequence resource="EMBL-CDS" id="AAF63165"/>
    </conflict>
</comment>
<feature type="signal peptide" evidence="2">
    <location>
        <begin position="1"/>
        <end position="24"/>
    </location>
</feature>
<feature type="chain" id="PRO_0000023671" description="Peroxidase 5">
    <location>
        <begin position="25"/>
        <end position="321"/>
    </location>
</feature>
<feature type="active site" description="Proton acceptor" evidence="3 4">
    <location>
        <position position="66"/>
    </location>
</feature>
<feature type="binding site" evidence="3">
    <location>
        <position position="67"/>
    </location>
    <ligand>
        <name>Ca(2+)</name>
        <dbReference type="ChEBI" id="CHEBI:29108"/>
        <label>1</label>
    </ligand>
</feature>
<feature type="binding site" evidence="3">
    <location>
        <position position="70"/>
    </location>
    <ligand>
        <name>Ca(2+)</name>
        <dbReference type="ChEBI" id="CHEBI:29108"/>
        <label>1</label>
    </ligand>
</feature>
<feature type="binding site" evidence="3">
    <location>
        <position position="72"/>
    </location>
    <ligand>
        <name>Ca(2+)</name>
        <dbReference type="ChEBI" id="CHEBI:29108"/>
        <label>1</label>
    </ligand>
</feature>
<feature type="binding site" evidence="3">
    <location>
        <position position="74"/>
    </location>
    <ligand>
        <name>Ca(2+)</name>
        <dbReference type="ChEBI" id="CHEBI:29108"/>
        <label>1</label>
    </ligand>
</feature>
<feature type="binding site" evidence="3">
    <location>
        <position position="76"/>
    </location>
    <ligand>
        <name>Ca(2+)</name>
        <dbReference type="ChEBI" id="CHEBI:29108"/>
        <label>1</label>
    </ligand>
</feature>
<feature type="binding site" evidence="3">
    <location>
        <position position="164"/>
    </location>
    <ligand>
        <name>substrate</name>
    </ligand>
</feature>
<feature type="binding site" description="axial binding residue" evidence="3">
    <location>
        <position position="194"/>
    </location>
    <ligand>
        <name>heme b</name>
        <dbReference type="ChEBI" id="CHEBI:60344"/>
    </ligand>
    <ligandPart>
        <name>Fe</name>
        <dbReference type="ChEBI" id="CHEBI:18248"/>
    </ligandPart>
</feature>
<feature type="binding site" evidence="3">
    <location>
        <position position="195"/>
    </location>
    <ligand>
        <name>Ca(2+)</name>
        <dbReference type="ChEBI" id="CHEBI:29108"/>
        <label>2</label>
    </ligand>
</feature>
<feature type="binding site" evidence="3">
    <location>
        <position position="240"/>
    </location>
    <ligand>
        <name>Ca(2+)</name>
        <dbReference type="ChEBI" id="CHEBI:29108"/>
        <label>2</label>
    </ligand>
</feature>
<feature type="binding site" evidence="3">
    <location>
        <position position="243"/>
    </location>
    <ligand>
        <name>Ca(2+)</name>
        <dbReference type="ChEBI" id="CHEBI:29108"/>
        <label>2</label>
    </ligand>
</feature>
<feature type="binding site" evidence="3">
    <location>
        <position position="248"/>
    </location>
    <ligand>
        <name>Ca(2+)</name>
        <dbReference type="ChEBI" id="CHEBI:29108"/>
        <label>2</label>
    </ligand>
</feature>
<feature type="site" description="Transition state stabilizer" evidence="3">
    <location>
        <position position="62"/>
    </location>
</feature>
<feature type="modified residue" description="Pyrrolidone carboxylic acid" evidence="1 3">
    <location>
        <position position="25"/>
    </location>
</feature>
<feature type="glycosylation site" description="N-linked (GlcNAc...) asparagine" evidence="2">
    <location>
        <position position="211"/>
    </location>
</feature>
<feature type="glycosylation site" description="N-linked (GlcNAc...) asparagine" evidence="2">
    <location>
        <position position="285"/>
    </location>
</feature>
<feature type="disulfide bond" evidence="3">
    <location>
        <begin position="35"/>
        <end position="115"/>
    </location>
</feature>
<feature type="disulfide bond" evidence="3">
    <location>
        <begin position="68"/>
        <end position="73"/>
    </location>
</feature>
<feature type="disulfide bond" evidence="3">
    <location>
        <begin position="121"/>
        <end position="317"/>
    </location>
</feature>
<feature type="disulfide bond" evidence="3">
    <location>
        <begin position="201"/>
        <end position="227"/>
    </location>
</feature>
<accession>Q9M9Q9</accession>
<accession>Q9MA28</accession>
<organism>
    <name type="scientific">Arabidopsis thaliana</name>
    <name type="common">Mouse-ear cress</name>
    <dbReference type="NCBI Taxonomy" id="3702"/>
    <lineage>
        <taxon>Eukaryota</taxon>
        <taxon>Viridiplantae</taxon>
        <taxon>Streptophyta</taxon>
        <taxon>Embryophyta</taxon>
        <taxon>Tracheophyta</taxon>
        <taxon>Spermatophyta</taxon>
        <taxon>Magnoliopsida</taxon>
        <taxon>eudicotyledons</taxon>
        <taxon>Gunneridae</taxon>
        <taxon>Pentapetalae</taxon>
        <taxon>rosids</taxon>
        <taxon>malvids</taxon>
        <taxon>Brassicales</taxon>
        <taxon>Brassicaceae</taxon>
        <taxon>Camelineae</taxon>
        <taxon>Arabidopsis</taxon>
    </lineage>
</organism>
<sequence length="321" mass="35007">MERFSLRFVLMMVSIILTSSICQAQLSPTFYDQSCRNALSKIRSSVRTAIARERRMAASLIRMHFHDCFVHGCDASILLEGTSTIESERDALPNFKSVRGFEVIDKAKSEVEKVCPGIVSCADIIAVAARDASEYVGGPKWAVKVGRRDSTAAFKALANSGELPGFKDTLDQLSGLFSKKGLNTRDLVALSGAHTIGQSQCFLFRDRLYENSSDIDAGFASTRKRRCPTVGGDGNLAALDLVTPNSFDNNYYKNLMQKKGLLVTDQVLFGSGASTDGIVSEYSKNRSKFAADFATAMIKMGNIEPLTGSNGEIRKICSFVN</sequence>
<evidence type="ECO:0000250" key="1">
    <source>
        <dbReference type="UniProtKB" id="Q42578"/>
    </source>
</evidence>
<evidence type="ECO:0000255" key="2"/>
<evidence type="ECO:0000255" key="3">
    <source>
        <dbReference type="PROSITE-ProRule" id="PRU00297"/>
    </source>
</evidence>
<evidence type="ECO:0000255" key="4">
    <source>
        <dbReference type="PROSITE-ProRule" id="PRU10012"/>
    </source>
</evidence>
<evidence type="ECO:0000305" key="5"/>
<keyword id="KW-0106">Calcium</keyword>
<keyword id="KW-1015">Disulfide bond</keyword>
<keyword id="KW-0325">Glycoprotein</keyword>
<keyword id="KW-0349">Heme</keyword>
<keyword id="KW-0408">Iron</keyword>
<keyword id="KW-0479">Metal-binding</keyword>
<keyword id="KW-0560">Oxidoreductase</keyword>
<keyword id="KW-0575">Peroxidase</keyword>
<keyword id="KW-0873">Pyrrolidone carboxylic acid</keyword>
<keyword id="KW-1185">Reference proteome</keyword>
<keyword id="KW-0964">Secreted</keyword>
<keyword id="KW-0732">Signal</keyword>
<name>PER5_ARATH</name>